<dbReference type="EMBL" id="CP000029">
    <property type="protein sequence ID" value="AAW53684.1"/>
    <property type="molecule type" value="Genomic_DNA"/>
</dbReference>
<dbReference type="RefSeq" id="WP_001832120.1">
    <property type="nucleotide sequence ID" value="NC_002976.3"/>
</dbReference>
<dbReference type="SMR" id="Q5HR71"/>
<dbReference type="STRING" id="176279.SERP0322"/>
<dbReference type="KEGG" id="ser:SERP0322"/>
<dbReference type="eggNOG" id="COG0217">
    <property type="taxonomic scope" value="Bacteria"/>
</dbReference>
<dbReference type="HOGENOM" id="CLU_062974_2_0_9"/>
<dbReference type="Proteomes" id="UP000000531">
    <property type="component" value="Chromosome"/>
</dbReference>
<dbReference type="GO" id="GO:0005829">
    <property type="term" value="C:cytosol"/>
    <property type="evidence" value="ECO:0007669"/>
    <property type="project" value="TreeGrafter"/>
</dbReference>
<dbReference type="GO" id="GO:0003677">
    <property type="term" value="F:DNA binding"/>
    <property type="evidence" value="ECO:0007669"/>
    <property type="project" value="UniProtKB-UniRule"/>
</dbReference>
<dbReference type="GO" id="GO:0006355">
    <property type="term" value="P:regulation of DNA-templated transcription"/>
    <property type="evidence" value="ECO:0007669"/>
    <property type="project" value="UniProtKB-UniRule"/>
</dbReference>
<dbReference type="FunFam" id="1.10.10.200:FF:000003">
    <property type="entry name" value="Probable transcriptional regulatory protein YeeN"/>
    <property type="match status" value="1"/>
</dbReference>
<dbReference type="Gene3D" id="1.10.10.200">
    <property type="match status" value="1"/>
</dbReference>
<dbReference type="Gene3D" id="3.30.70.980">
    <property type="match status" value="2"/>
</dbReference>
<dbReference type="HAMAP" id="MF_00693">
    <property type="entry name" value="Transcrip_reg_TACO1"/>
    <property type="match status" value="1"/>
</dbReference>
<dbReference type="HAMAP" id="MF_00918">
    <property type="entry name" value="Transcrip_reg_TACO1_YeeN"/>
    <property type="match status" value="1"/>
</dbReference>
<dbReference type="InterPro" id="IPR017856">
    <property type="entry name" value="Integrase-like_N"/>
</dbReference>
<dbReference type="InterPro" id="IPR048300">
    <property type="entry name" value="TACO1_YebC-like_2nd/3rd_dom"/>
</dbReference>
<dbReference type="InterPro" id="IPR049083">
    <property type="entry name" value="TACO1_YebC_N"/>
</dbReference>
<dbReference type="InterPro" id="IPR002876">
    <property type="entry name" value="Transcrip_reg_TACO1-like"/>
</dbReference>
<dbReference type="InterPro" id="IPR026564">
    <property type="entry name" value="Transcrip_reg_TACO1-like_dom3"/>
</dbReference>
<dbReference type="InterPro" id="IPR026562">
    <property type="entry name" value="Transcrip_reg_TACO1_YeeN"/>
</dbReference>
<dbReference type="InterPro" id="IPR029072">
    <property type="entry name" value="YebC-like"/>
</dbReference>
<dbReference type="NCBIfam" id="NF001030">
    <property type="entry name" value="PRK00110.1"/>
    <property type="match status" value="1"/>
</dbReference>
<dbReference type="NCBIfam" id="NF009044">
    <property type="entry name" value="PRK12378.1"/>
    <property type="match status" value="1"/>
</dbReference>
<dbReference type="NCBIfam" id="TIGR01033">
    <property type="entry name" value="YebC/PmpR family DNA-binding transcriptional regulator"/>
    <property type="match status" value="1"/>
</dbReference>
<dbReference type="PANTHER" id="PTHR12532">
    <property type="entry name" value="TRANSLATIONAL ACTIVATOR OF CYTOCHROME C OXIDASE 1"/>
    <property type="match status" value="1"/>
</dbReference>
<dbReference type="PANTHER" id="PTHR12532:SF0">
    <property type="entry name" value="TRANSLATIONAL ACTIVATOR OF CYTOCHROME C OXIDASE 1"/>
    <property type="match status" value="1"/>
</dbReference>
<dbReference type="Pfam" id="PF20772">
    <property type="entry name" value="TACO1_YebC_N"/>
    <property type="match status" value="1"/>
</dbReference>
<dbReference type="Pfam" id="PF01709">
    <property type="entry name" value="Transcrip_reg"/>
    <property type="match status" value="1"/>
</dbReference>
<dbReference type="SUPFAM" id="SSF75625">
    <property type="entry name" value="YebC-like"/>
    <property type="match status" value="1"/>
</dbReference>
<feature type="chain" id="PRO_0000175898" description="Probable transcriptional regulatory protein SERP0322">
    <location>
        <begin position="1"/>
        <end position="238"/>
    </location>
</feature>
<name>Y322_STAEQ</name>
<organism>
    <name type="scientific">Staphylococcus epidermidis (strain ATCC 35984 / DSM 28319 / BCRC 17069 / CCUG 31568 / BM 3577 / RP62A)</name>
    <dbReference type="NCBI Taxonomy" id="176279"/>
    <lineage>
        <taxon>Bacteria</taxon>
        <taxon>Bacillati</taxon>
        <taxon>Bacillota</taxon>
        <taxon>Bacilli</taxon>
        <taxon>Bacillales</taxon>
        <taxon>Staphylococcaceae</taxon>
        <taxon>Staphylococcus</taxon>
    </lineage>
</organism>
<keyword id="KW-0963">Cytoplasm</keyword>
<keyword id="KW-0238">DNA-binding</keyword>
<keyword id="KW-1185">Reference proteome</keyword>
<keyword id="KW-0804">Transcription</keyword>
<keyword id="KW-0805">Transcription regulation</keyword>
<evidence type="ECO:0000255" key="1">
    <source>
        <dbReference type="HAMAP-Rule" id="MF_00918"/>
    </source>
</evidence>
<protein>
    <recommendedName>
        <fullName evidence="1">Probable transcriptional regulatory protein SERP0322</fullName>
    </recommendedName>
</protein>
<proteinExistence type="inferred from homology"/>
<sequence length="238" mass="26567">MGRKWNNIKEKKAQKDKNTSRIYAKFGKEIYVAAKSGEPNPESNQTLRLVLERAKTYSVPNHIIDRAIDKAKGAGDENYDHLRYEGFGPNGSMLIVDALTNNVNRTASDVRAAFGKNGGNMGVSGSVAYMFDHTATFGVEGKSVDEVLETLMEQDIDVRDVIDDNGLTIVYAEPDQFAQVQDALREAGVEEFKVAEFEMLPQTDIELSEEDQAIFEKLIDALEDLEDVQNVFHNVDLK</sequence>
<gene>
    <name type="ordered locus">SERP0322</name>
</gene>
<reference key="1">
    <citation type="journal article" date="2005" name="J. Bacteriol.">
        <title>Insights on evolution of virulence and resistance from the complete genome analysis of an early methicillin-resistant Staphylococcus aureus strain and a biofilm-producing methicillin-resistant Staphylococcus epidermidis strain.</title>
        <authorList>
            <person name="Gill S.R."/>
            <person name="Fouts D.E."/>
            <person name="Archer G.L."/>
            <person name="Mongodin E.F."/>
            <person name="DeBoy R.T."/>
            <person name="Ravel J."/>
            <person name="Paulsen I.T."/>
            <person name="Kolonay J.F."/>
            <person name="Brinkac L.M."/>
            <person name="Beanan M.J."/>
            <person name="Dodson R.J."/>
            <person name="Daugherty S.C."/>
            <person name="Madupu R."/>
            <person name="Angiuoli S.V."/>
            <person name="Durkin A.S."/>
            <person name="Haft D.H."/>
            <person name="Vamathevan J.J."/>
            <person name="Khouri H."/>
            <person name="Utterback T.R."/>
            <person name="Lee C."/>
            <person name="Dimitrov G."/>
            <person name="Jiang L."/>
            <person name="Qin H."/>
            <person name="Weidman J."/>
            <person name="Tran K."/>
            <person name="Kang K.H."/>
            <person name="Hance I.R."/>
            <person name="Nelson K.E."/>
            <person name="Fraser C.M."/>
        </authorList>
    </citation>
    <scope>NUCLEOTIDE SEQUENCE [LARGE SCALE GENOMIC DNA]</scope>
    <source>
        <strain>ATCC 35984 / DSM 28319 / BCRC 17069 / CCUG 31568 / BM 3577 / RP62A</strain>
    </source>
</reference>
<accession>Q5HR71</accession>
<comment type="subcellular location">
    <subcellularLocation>
        <location evidence="1">Cytoplasm</location>
    </subcellularLocation>
</comment>
<comment type="similarity">
    <text evidence="1">Belongs to the TACO1 family. YeeN subfamily.</text>
</comment>